<feature type="chain" id="PRO_0000204177" description="Regulator of G-protein signaling 1">
    <location>
        <begin position="1"/>
        <end position="209"/>
    </location>
</feature>
<feature type="domain" description="RGS" evidence="3">
    <location>
        <begin position="85"/>
        <end position="200"/>
    </location>
</feature>
<feature type="region of interest" description="Disordered" evidence="4">
    <location>
        <begin position="18"/>
        <end position="42"/>
    </location>
</feature>
<feature type="compositionally biased region" description="Basic and acidic residues" evidence="4">
    <location>
        <begin position="24"/>
        <end position="38"/>
    </location>
</feature>
<feature type="splice variant" id="VSP_058127" description="In isoform 2.">
    <location>
        <begin position="1"/>
        <end position="47"/>
    </location>
</feature>
<comment type="function">
    <text evidence="1 2">Regulates G protein-coupled receptor signaling cascades, including signaling downstream of the N-formylpeptide chemoattractant receptors and leukotriene receptors. Inhibits B cell chemotaxis toward CXCL12 (By similarity). Inhibits signal transduction by increasing the GTPase activity of G protein alpha subunits, thereby driving them into their inactive GDP-bound form (By similarity).</text>
</comment>
<comment type="subunit">
    <text evidence="1">Interacts with GNAI1 and GNAQ.</text>
</comment>
<comment type="subcellular location">
    <subcellularLocation>
        <location evidence="1">Cell membrane</location>
        <topology evidence="1">Peripheral membrane protein</topology>
        <orientation evidence="1">Cytoplasmic side</orientation>
    </subcellularLocation>
    <subcellularLocation>
        <location evidence="1">Cytoplasm</location>
        <location evidence="1">Cytosol</location>
    </subcellularLocation>
</comment>
<comment type="alternative products">
    <event type="alternative splicing"/>
    <isoform>
        <id>P97844-1</id>
        <name>1</name>
        <sequence type="displayed"/>
    </isoform>
    <isoform>
        <id>P97844-2</id>
        <name>2</name>
        <sequence type="described" ref="VSP_058127"/>
    </isoform>
</comment>
<comment type="tissue specificity">
    <text evidence="5">Expressed in multiple tissues.</text>
</comment>
<dbReference type="EMBL" id="AABR07021216">
    <property type="status" value="NOT_ANNOTATED_CDS"/>
    <property type="molecule type" value="Genomic_DNA"/>
</dbReference>
<dbReference type="EMBL" id="CH473958">
    <property type="protein sequence ID" value="EDM09598.1"/>
    <property type="molecule type" value="Genomic_DNA"/>
</dbReference>
<dbReference type="EMBL" id="BC098681">
    <property type="protein sequence ID" value="AAH98681.1"/>
    <property type="molecule type" value="mRNA"/>
</dbReference>
<dbReference type="EMBL" id="U77698">
    <property type="protein sequence ID" value="AAB48300.1"/>
    <property type="molecule type" value="mRNA"/>
</dbReference>
<dbReference type="RefSeq" id="NP_001388206.1">
    <molecule id="P97844-1"/>
    <property type="nucleotide sequence ID" value="NM_001401277.1"/>
</dbReference>
<dbReference type="RefSeq" id="NP_062209.1">
    <molecule id="P97844-2"/>
    <property type="nucleotide sequence ID" value="NM_019336.3"/>
</dbReference>
<dbReference type="RefSeq" id="XP_006250036.1">
    <property type="nucleotide sequence ID" value="XM_006249974.3"/>
</dbReference>
<dbReference type="SMR" id="P97844"/>
<dbReference type="FunCoup" id="P97844">
    <property type="interactions" value="184"/>
</dbReference>
<dbReference type="STRING" id="10116.ENSRNOP00000005251"/>
<dbReference type="PhosphoSitePlus" id="P97844"/>
<dbReference type="PaxDb" id="10116-ENSRNOP00000005251"/>
<dbReference type="Ensembl" id="ENSRNOT00000005251.8">
    <molecule id="P97844-1"/>
    <property type="protein sequence ID" value="ENSRNOP00000005251.5"/>
    <property type="gene ID" value="ENSRNOG00000003895.8"/>
</dbReference>
<dbReference type="GeneID" id="54289"/>
<dbReference type="KEGG" id="rno:54289"/>
<dbReference type="UCSC" id="RGD:3561">
    <molecule id="P97844-1"/>
    <property type="organism name" value="rat"/>
</dbReference>
<dbReference type="AGR" id="RGD:3561"/>
<dbReference type="CTD" id="5996"/>
<dbReference type="RGD" id="3561">
    <property type="gene designation" value="Rgs1"/>
</dbReference>
<dbReference type="eggNOG" id="KOG3589">
    <property type="taxonomic scope" value="Eukaryota"/>
</dbReference>
<dbReference type="GeneTree" id="ENSGT00940000157316"/>
<dbReference type="HOGENOM" id="CLU_059863_3_3_1"/>
<dbReference type="InParanoid" id="P97844"/>
<dbReference type="OMA" id="CMVPHIE"/>
<dbReference type="TreeFam" id="TF315837"/>
<dbReference type="Reactome" id="R-RNO-416476">
    <property type="pathway name" value="G alpha (q) signalling events"/>
</dbReference>
<dbReference type="Reactome" id="R-RNO-418594">
    <property type="pathway name" value="G alpha (i) signalling events"/>
</dbReference>
<dbReference type="PRO" id="PR:P97844"/>
<dbReference type="Proteomes" id="UP000002494">
    <property type="component" value="Chromosome 13"/>
</dbReference>
<dbReference type="Proteomes" id="UP000234681">
    <property type="component" value="Chromosome 13"/>
</dbReference>
<dbReference type="Bgee" id="ENSRNOG00000003895">
    <property type="expression patterns" value="Expressed in colon and 16 other cell types or tissues"/>
</dbReference>
<dbReference type="GO" id="GO:0009898">
    <property type="term" value="C:cytoplasmic side of plasma membrane"/>
    <property type="evidence" value="ECO:0000250"/>
    <property type="project" value="UniProtKB"/>
</dbReference>
<dbReference type="GO" id="GO:0005829">
    <property type="term" value="C:cytosol"/>
    <property type="evidence" value="ECO:0000250"/>
    <property type="project" value="UniProtKB"/>
</dbReference>
<dbReference type="GO" id="GO:0001965">
    <property type="term" value="F:G-protein alpha-subunit binding"/>
    <property type="evidence" value="ECO:0000266"/>
    <property type="project" value="RGD"/>
</dbReference>
<dbReference type="GO" id="GO:0005096">
    <property type="term" value="F:GTPase activator activity"/>
    <property type="evidence" value="ECO:0000250"/>
    <property type="project" value="UniProtKB"/>
</dbReference>
<dbReference type="GO" id="GO:0007186">
    <property type="term" value="P:G protein-coupled receptor signaling pathway"/>
    <property type="evidence" value="ECO:0000250"/>
    <property type="project" value="UniProtKB"/>
</dbReference>
<dbReference type="GO" id="GO:0061737">
    <property type="term" value="P:leukotriene signaling pathway"/>
    <property type="evidence" value="ECO:0000250"/>
    <property type="project" value="UniProtKB"/>
</dbReference>
<dbReference type="GO" id="GO:0009968">
    <property type="term" value="P:negative regulation of signal transduction"/>
    <property type="evidence" value="ECO:0007669"/>
    <property type="project" value="UniProtKB-KW"/>
</dbReference>
<dbReference type="GO" id="GO:0043547">
    <property type="term" value="P:positive regulation of GTPase activity"/>
    <property type="evidence" value="ECO:0000250"/>
    <property type="project" value="UniProtKB"/>
</dbReference>
<dbReference type="GO" id="GO:0009617">
    <property type="term" value="P:response to bacterium"/>
    <property type="evidence" value="ECO:0000266"/>
    <property type="project" value="RGD"/>
</dbReference>
<dbReference type="GO" id="GO:0007165">
    <property type="term" value="P:signal transduction"/>
    <property type="evidence" value="ECO:0000250"/>
    <property type="project" value="UniProtKB"/>
</dbReference>
<dbReference type="FunFam" id="1.10.167.10:FF:000001">
    <property type="entry name" value="Putative regulator of g-protein signaling 12"/>
    <property type="match status" value="1"/>
</dbReference>
<dbReference type="FunFam" id="1.10.196.10:FF:000009">
    <property type="entry name" value="Regulator of G-protein signaling 1"/>
    <property type="match status" value="1"/>
</dbReference>
<dbReference type="Gene3D" id="1.10.196.10">
    <property type="match status" value="2"/>
</dbReference>
<dbReference type="Gene3D" id="1.10.167.10">
    <property type="entry name" value="Regulator of G-protein Signalling 4, domain 2"/>
    <property type="match status" value="1"/>
</dbReference>
<dbReference type="InterPro" id="IPR016137">
    <property type="entry name" value="RGS"/>
</dbReference>
<dbReference type="InterPro" id="IPR036305">
    <property type="entry name" value="RGS_sf"/>
</dbReference>
<dbReference type="InterPro" id="IPR024066">
    <property type="entry name" value="RGS_subdom1/3"/>
</dbReference>
<dbReference type="InterPro" id="IPR044926">
    <property type="entry name" value="RGS_subdomain_2"/>
</dbReference>
<dbReference type="PANTHER" id="PTHR10845">
    <property type="entry name" value="REGULATOR OF G PROTEIN SIGNALING"/>
    <property type="match status" value="1"/>
</dbReference>
<dbReference type="PANTHER" id="PTHR10845:SF34">
    <property type="entry name" value="REGULATOR OF G-PROTEIN SIGNALING 1"/>
    <property type="match status" value="1"/>
</dbReference>
<dbReference type="Pfam" id="PF00615">
    <property type="entry name" value="RGS"/>
    <property type="match status" value="1"/>
</dbReference>
<dbReference type="PRINTS" id="PR01301">
    <property type="entry name" value="RGSPROTEIN"/>
</dbReference>
<dbReference type="SMART" id="SM00315">
    <property type="entry name" value="RGS"/>
    <property type="match status" value="1"/>
</dbReference>
<dbReference type="SUPFAM" id="SSF48097">
    <property type="entry name" value="Regulator of G-protein signaling, RGS"/>
    <property type="match status" value="1"/>
</dbReference>
<dbReference type="PROSITE" id="PS50132">
    <property type="entry name" value="RGS"/>
    <property type="match status" value="1"/>
</dbReference>
<protein>
    <recommendedName>
        <fullName>Regulator of G-protein signaling 1</fullName>
        <shortName>RGS1</shortName>
    </recommendedName>
</protein>
<gene>
    <name type="primary">Rgs1</name>
</gene>
<sequence length="209" mass="24096">MRAAAISMPRLNKMPGMFFSASPKDSKEPSHSLLDDNKQKKRPKTFGMDMKAYLRSMIPHLESGMKSSKSKDILSAEEVMQWSQSLEKLLANQMGQNVFGKFLKSEFSEENIEFWLACEDYKKTETDLLHNKAEHIYKAFVHSDAVKQINIDFHTRESTAKKIKTPTPTCFDEAQKVIYALMEKDSYPRFLKSNIYLNLLNDLQANTLK</sequence>
<keyword id="KW-0025">Alternative splicing</keyword>
<keyword id="KW-1003">Cell membrane</keyword>
<keyword id="KW-0963">Cytoplasm</keyword>
<keyword id="KW-0343">GTPase activation</keyword>
<keyword id="KW-0472">Membrane</keyword>
<keyword id="KW-1185">Reference proteome</keyword>
<keyword id="KW-0734">Signal transduction inhibitor</keyword>
<proteinExistence type="evidence at transcript level"/>
<organism>
    <name type="scientific">Rattus norvegicus</name>
    <name type="common">Rat</name>
    <dbReference type="NCBI Taxonomy" id="10116"/>
    <lineage>
        <taxon>Eukaryota</taxon>
        <taxon>Metazoa</taxon>
        <taxon>Chordata</taxon>
        <taxon>Craniata</taxon>
        <taxon>Vertebrata</taxon>
        <taxon>Euteleostomi</taxon>
        <taxon>Mammalia</taxon>
        <taxon>Eutheria</taxon>
        <taxon>Euarchontoglires</taxon>
        <taxon>Glires</taxon>
        <taxon>Rodentia</taxon>
        <taxon>Myomorpha</taxon>
        <taxon>Muroidea</taxon>
        <taxon>Muridae</taxon>
        <taxon>Murinae</taxon>
        <taxon>Rattus</taxon>
    </lineage>
</organism>
<name>RGS1_RAT</name>
<accession>P97844</accession>
<accession>A0A0H2UHC4</accession>
<accession>Q4KM99</accession>
<reference key="1">
    <citation type="journal article" date="2004" name="Nature">
        <title>Genome sequence of the Brown Norway rat yields insights into mammalian evolution.</title>
        <authorList>
            <person name="Gibbs R.A."/>
            <person name="Weinstock G.M."/>
            <person name="Metzker M.L."/>
            <person name="Muzny D.M."/>
            <person name="Sodergren E.J."/>
            <person name="Scherer S."/>
            <person name="Scott G."/>
            <person name="Steffen D."/>
            <person name="Worley K.C."/>
            <person name="Burch P.E."/>
            <person name="Okwuonu G."/>
            <person name="Hines S."/>
            <person name="Lewis L."/>
            <person name="Deramo C."/>
            <person name="Delgado O."/>
            <person name="Dugan-Rocha S."/>
            <person name="Miner G."/>
            <person name="Morgan M."/>
            <person name="Hawes A."/>
            <person name="Gill R."/>
            <person name="Holt R.A."/>
            <person name="Adams M.D."/>
            <person name="Amanatides P.G."/>
            <person name="Baden-Tillson H."/>
            <person name="Barnstead M."/>
            <person name="Chin S."/>
            <person name="Evans C.A."/>
            <person name="Ferriera S."/>
            <person name="Fosler C."/>
            <person name="Glodek A."/>
            <person name="Gu Z."/>
            <person name="Jennings D."/>
            <person name="Kraft C.L."/>
            <person name="Nguyen T."/>
            <person name="Pfannkoch C.M."/>
            <person name="Sitter C."/>
            <person name="Sutton G.G."/>
            <person name="Venter J.C."/>
            <person name="Woodage T."/>
            <person name="Smith D."/>
            <person name="Lee H.-M."/>
            <person name="Gustafson E."/>
            <person name="Cahill P."/>
            <person name="Kana A."/>
            <person name="Doucette-Stamm L."/>
            <person name="Weinstock K."/>
            <person name="Fechtel K."/>
            <person name="Weiss R.B."/>
            <person name="Dunn D.M."/>
            <person name="Green E.D."/>
            <person name="Blakesley R.W."/>
            <person name="Bouffard G.G."/>
            <person name="De Jong P.J."/>
            <person name="Osoegawa K."/>
            <person name="Zhu B."/>
            <person name="Marra M."/>
            <person name="Schein J."/>
            <person name="Bosdet I."/>
            <person name="Fjell C."/>
            <person name="Jones S."/>
            <person name="Krzywinski M."/>
            <person name="Mathewson C."/>
            <person name="Siddiqui A."/>
            <person name="Wye N."/>
            <person name="McPherson J."/>
            <person name="Zhao S."/>
            <person name="Fraser C.M."/>
            <person name="Shetty J."/>
            <person name="Shatsman S."/>
            <person name="Geer K."/>
            <person name="Chen Y."/>
            <person name="Abramzon S."/>
            <person name="Nierman W.C."/>
            <person name="Havlak P.H."/>
            <person name="Chen R."/>
            <person name="Durbin K.J."/>
            <person name="Egan A."/>
            <person name="Ren Y."/>
            <person name="Song X.-Z."/>
            <person name="Li B."/>
            <person name="Liu Y."/>
            <person name="Qin X."/>
            <person name="Cawley S."/>
            <person name="Cooney A.J."/>
            <person name="D'Souza L.M."/>
            <person name="Martin K."/>
            <person name="Wu J.Q."/>
            <person name="Gonzalez-Garay M.L."/>
            <person name="Jackson A.R."/>
            <person name="Kalafus K.J."/>
            <person name="McLeod M.P."/>
            <person name="Milosavljevic A."/>
            <person name="Virk D."/>
            <person name="Volkov A."/>
            <person name="Wheeler D.A."/>
            <person name="Zhang Z."/>
            <person name="Bailey J.A."/>
            <person name="Eichler E.E."/>
            <person name="Tuzun E."/>
            <person name="Birney E."/>
            <person name="Mongin E."/>
            <person name="Ureta-Vidal A."/>
            <person name="Woodwark C."/>
            <person name="Zdobnov E."/>
            <person name="Bork P."/>
            <person name="Suyama M."/>
            <person name="Torrents D."/>
            <person name="Alexandersson M."/>
            <person name="Trask B.J."/>
            <person name="Young J.M."/>
            <person name="Huang H."/>
            <person name="Wang H."/>
            <person name="Xing H."/>
            <person name="Daniels S."/>
            <person name="Gietzen D."/>
            <person name="Schmidt J."/>
            <person name="Stevens K."/>
            <person name="Vitt U."/>
            <person name="Wingrove J."/>
            <person name="Camara F."/>
            <person name="Mar Alba M."/>
            <person name="Abril J.F."/>
            <person name="Guigo R."/>
            <person name="Smit A."/>
            <person name="Dubchak I."/>
            <person name="Rubin E.M."/>
            <person name="Couronne O."/>
            <person name="Poliakov A."/>
            <person name="Huebner N."/>
            <person name="Ganten D."/>
            <person name="Goesele C."/>
            <person name="Hummel O."/>
            <person name="Kreitler T."/>
            <person name="Lee Y.-A."/>
            <person name="Monti J."/>
            <person name="Schulz H."/>
            <person name="Zimdahl H."/>
            <person name="Himmelbauer H."/>
            <person name="Lehrach H."/>
            <person name="Jacob H.J."/>
            <person name="Bromberg S."/>
            <person name="Gullings-Handley J."/>
            <person name="Jensen-Seaman M.I."/>
            <person name="Kwitek A.E."/>
            <person name="Lazar J."/>
            <person name="Pasko D."/>
            <person name="Tonellato P.J."/>
            <person name="Twigger S."/>
            <person name="Ponting C.P."/>
            <person name="Duarte J.M."/>
            <person name="Rice S."/>
            <person name="Goodstadt L."/>
            <person name="Beatson S.A."/>
            <person name="Emes R.D."/>
            <person name="Winter E.E."/>
            <person name="Webber C."/>
            <person name="Brandt P."/>
            <person name="Nyakatura G."/>
            <person name="Adetobi M."/>
            <person name="Chiaromonte F."/>
            <person name="Elnitski L."/>
            <person name="Eswara P."/>
            <person name="Hardison R.C."/>
            <person name="Hou M."/>
            <person name="Kolbe D."/>
            <person name="Makova K."/>
            <person name="Miller W."/>
            <person name="Nekrutenko A."/>
            <person name="Riemer C."/>
            <person name="Schwartz S."/>
            <person name="Taylor J."/>
            <person name="Yang S."/>
            <person name="Zhang Y."/>
            <person name="Lindpaintner K."/>
            <person name="Andrews T.D."/>
            <person name="Caccamo M."/>
            <person name="Clamp M."/>
            <person name="Clarke L."/>
            <person name="Curwen V."/>
            <person name="Durbin R.M."/>
            <person name="Eyras E."/>
            <person name="Searle S.M."/>
            <person name="Cooper G.M."/>
            <person name="Batzoglou S."/>
            <person name="Brudno M."/>
            <person name="Sidow A."/>
            <person name="Stone E.A."/>
            <person name="Payseur B.A."/>
            <person name="Bourque G."/>
            <person name="Lopez-Otin C."/>
            <person name="Puente X.S."/>
            <person name="Chakrabarti K."/>
            <person name="Chatterji S."/>
            <person name="Dewey C."/>
            <person name="Pachter L."/>
            <person name="Bray N."/>
            <person name="Yap V.B."/>
            <person name="Caspi A."/>
            <person name="Tesler G."/>
            <person name="Pevzner P.A."/>
            <person name="Haussler D."/>
            <person name="Roskin K.M."/>
            <person name="Baertsch R."/>
            <person name="Clawson H."/>
            <person name="Furey T.S."/>
            <person name="Hinrichs A.S."/>
            <person name="Karolchik D."/>
            <person name="Kent W.J."/>
            <person name="Rosenbloom K.R."/>
            <person name="Trumbower H."/>
            <person name="Weirauch M."/>
            <person name="Cooper D.N."/>
            <person name="Stenson P.D."/>
            <person name="Ma B."/>
            <person name="Brent M."/>
            <person name="Arumugam M."/>
            <person name="Shteynberg D."/>
            <person name="Copley R.R."/>
            <person name="Taylor M.S."/>
            <person name="Riethman H."/>
            <person name="Mudunuri U."/>
            <person name="Peterson J."/>
            <person name="Guyer M."/>
            <person name="Felsenfeld A."/>
            <person name="Old S."/>
            <person name="Mockrin S."/>
            <person name="Collins F.S."/>
        </authorList>
    </citation>
    <scope>NUCLEOTIDE SEQUENCE [LARGE SCALE GENOMIC DNA]</scope>
    <source>
        <strain>Brown Norway</strain>
    </source>
</reference>
<reference key="2">
    <citation type="submission" date="2005-09" db="EMBL/GenBank/DDBJ databases">
        <authorList>
            <person name="Mural R.J."/>
            <person name="Adams M.D."/>
            <person name="Myers E.W."/>
            <person name="Smith H.O."/>
            <person name="Venter J.C."/>
        </authorList>
    </citation>
    <scope>NUCLEOTIDE SEQUENCE [LARGE SCALE GENOMIC DNA]</scope>
    <source>
        <strain>Brown Norway</strain>
    </source>
</reference>
<reference key="3">
    <citation type="journal article" date="2004" name="Genome Res.">
        <title>The status, quality, and expansion of the NIH full-length cDNA project: the Mammalian Gene Collection (MGC).</title>
        <authorList>
            <consortium name="The MGC Project Team"/>
        </authorList>
    </citation>
    <scope>NUCLEOTIDE SEQUENCE [LARGE SCALE MRNA] (ISOFORM 2)</scope>
    <source>
        <tissue>Thymus</tissue>
    </source>
</reference>
<reference key="4">
    <citation type="submission" date="1997-03" db="EMBL/GenBank/DDBJ databases">
        <title>The rat RGS1 gene is expressed in multiple tissues.</title>
        <authorList>
            <person name="Greenwood M.T."/>
            <person name="Guo Y."/>
            <person name="Hussain S.N.A."/>
        </authorList>
    </citation>
    <scope>NUCLEOTIDE SEQUENCE [MRNA] OF 92-171</scope>
</reference>
<evidence type="ECO:0000250" key="1">
    <source>
        <dbReference type="UniProtKB" id="Q08116"/>
    </source>
</evidence>
<evidence type="ECO:0000250" key="2">
    <source>
        <dbReference type="UniProtKB" id="Q9JL25"/>
    </source>
</evidence>
<evidence type="ECO:0000255" key="3">
    <source>
        <dbReference type="PROSITE-ProRule" id="PRU00171"/>
    </source>
</evidence>
<evidence type="ECO:0000256" key="4">
    <source>
        <dbReference type="SAM" id="MobiDB-lite"/>
    </source>
</evidence>
<evidence type="ECO:0000305" key="5">
    <source ref="4"/>
</evidence>